<comment type="function">
    <text evidence="1">Catalyzes the isomerization of sedoheptulose 7-phosphate in D-glycero-D-manno-heptose 7-phosphate.</text>
</comment>
<comment type="catalytic activity">
    <reaction evidence="1">
        <text>2 D-sedoheptulose 7-phosphate = D-glycero-alpha-D-manno-heptose 7-phosphate + D-glycero-beta-D-manno-heptose 7-phosphate</text>
        <dbReference type="Rhea" id="RHEA:27489"/>
        <dbReference type="ChEBI" id="CHEBI:57483"/>
        <dbReference type="ChEBI" id="CHEBI:60203"/>
        <dbReference type="ChEBI" id="CHEBI:60204"/>
        <dbReference type="EC" id="5.3.1.28"/>
    </reaction>
</comment>
<comment type="cofactor">
    <cofactor evidence="1">
        <name>Zn(2+)</name>
        <dbReference type="ChEBI" id="CHEBI:29105"/>
    </cofactor>
    <text evidence="1">Binds 1 zinc ion per subunit.</text>
</comment>
<comment type="pathway">
    <text evidence="1">Carbohydrate biosynthesis; D-glycero-D-manno-heptose 7-phosphate biosynthesis; D-glycero-alpha-D-manno-heptose 7-phosphate and D-glycero-beta-D-manno-heptose 7-phosphate from sedoheptulose 7-phosphate: step 1/1.</text>
</comment>
<comment type="subunit">
    <text evidence="1">Homotetramer.</text>
</comment>
<comment type="subcellular location">
    <subcellularLocation>
        <location evidence="1">Cytoplasm</location>
    </subcellularLocation>
</comment>
<comment type="miscellaneous">
    <text evidence="1">The reaction produces a racemic mixture of D-glycero-alpha-D-manno-heptose 7-phosphate and D-glycero-beta-D-manno-heptose 7-phosphate.</text>
</comment>
<comment type="similarity">
    <text evidence="1">Belongs to the SIS family. GmhA subfamily.</text>
</comment>
<sequence>MYHDLIRSELNEAADTLAKFINDDANIDAIQRAAVLLADSFKAGGKVISCGNGGSHCDAMHFAEELTGRYRENRPGYPAIAISDVSHLSCVSNDFGYEYVFSRYVEAVGREGDVLLGISTSGNSGNIIKAIEAARAKGMKVITLTGKDGGKMAGSADVEIRVPHFGYADRIQEIHIKAIHILIQLIEKEMVKA</sequence>
<reference key="1">
    <citation type="submission" date="2007-09" db="EMBL/GenBank/DDBJ databases">
        <title>Complete sequence of chromosome of Serratia proteamaculans 568.</title>
        <authorList>
            <consortium name="US DOE Joint Genome Institute"/>
            <person name="Copeland A."/>
            <person name="Lucas S."/>
            <person name="Lapidus A."/>
            <person name="Barry K."/>
            <person name="Glavina del Rio T."/>
            <person name="Dalin E."/>
            <person name="Tice H."/>
            <person name="Pitluck S."/>
            <person name="Chain P."/>
            <person name="Malfatti S."/>
            <person name="Shin M."/>
            <person name="Vergez L."/>
            <person name="Schmutz J."/>
            <person name="Larimer F."/>
            <person name="Land M."/>
            <person name="Hauser L."/>
            <person name="Kyrpides N."/>
            <person name="Kim E."/>
            <person name="Taghavi S."/>
            <person name="Newman L."/>
            <person name="Vangronsveld J."/>
            <person name="van der Lelie D."/>
            <person name="Richardson P."/>
        </authorList>
    </citation>
    <scope>NUCLEOTIDE SEQUENCE [LARGE SCALE GENOMIC DNA]</scope>
    <source>
        <strain>568</strain>
    </source>
</reference>
<protein>
    <recommendedName>
        <fullName evidence="1">Phosphoheptose isomerase</fullName>
        <ecNumber evidence="1">5.3.1.28</ecNumber>
    </recommendedName>
    <alternativeName>
        <fullName evidence="1">Sedoheptulose 7-phosphate isomerase</fullName>
    </alternativeName>
</protein>
<proteinExistence type="inferred from homology"/>
<accession>A8GAB6</accession>
<evidence type="ECO:0000255" key="1">
    <source>
        <dbReference type="HAMAP-Rule" id="MF_00067"/>
    </source>
</evidence>
<keyword id="KW-0119">Carbohydrate metabolism</keyword>
<keyword id="KW-0963">Cytoplasm</keyword>
<keyword id="KW-0413">Isomerase</keyword>
<keyword id="KW-0479">Metal-binding</keyword>
<keyword id="KW-0862">Zinc</keyword>
<name>GMHA_SERP5</name>
<gene>
    <name evidence="1" type="primary">gmhA</name>
    <name type="ordered locus">Spro_0950</name>
</gene>
<feature type="chain" id="PRO_1000057453" description="Phosphoheptose isomerase">
    <location>
        <begin position="1"/>
        <end position="193"/>
    </location>
</feature>
<feature type="domain" description="SIS" evidence="1">
    <location>
        <begin position="37"/>
        <end position="193"/>
    </location>
</feature>
<feature type="binding site" evidence="1">
    <location>
        <begin position="52"/>
        <end position="54"/>
    </location>
    <ligand>
        <name>substrate</name>
    </ligand>
</feature>
<feature type="binding site" evidence="1">
    <location>
        <position position="61"/>
    </location>
    <ligand>
        <name>Zn(2+)</name>
        <dbReference type="ChEBI" id="CHEBI:29105"/>
    </ligand>
</feature>
<feature type="binding site" evidence="1">
    <location>
        <position position="65"/>
    </location>
    <ligand>
        <name>substrate</name>
    </ligand>
</feature>
<feature type="binding site" evidence="1">
    <location>
        <position position="65"/>
    </location>
    <ligand>
        <name>Zn(2+)</name>
        <dbReference type="ChEBI" id="CHEBI:29105"/>
    </ligand>
</feature>
<feature type="binding site" evidence="1">
    <location>
        <begin position="93"/>
        <end position="94"/>
    </location>
    <ligand>
        <name>substrate</name>
    </ligand>
</feature>
<feature type="binding site" evidence="1">
    <location>
        <begin position="119"/>
        <end position="121"/>
    </location>
    <ligand>
        <name>substrate</name>
    </ligand>
</feature>
<feature type="binding site" evidence="1">
    <location>
        <position position="124"/>
    </location>
    <ligand>
        <name>substrate</name>
    </ligand>
</feature>
<feature type="binding site" evidence="1">
    <location>
        <position position="172"/>
    </location>
    <ligand>
        <name>substrate</name>
    </ligand>
</feature>
<feature type="binding site" evidence="1">
    <location>
        <position position="172"/>
    </location>
    <ligand>
        <name>Zn(2+)</name>
        <dbReference type="ChEBI" id="CHEBI:29105"/>
    </ligand>
</feature>
<feature type="binding site" evidence="1">
    <location>
        <position position="180"/>
    </location>
    <ligand>
        <name>Zn(2+)</name>
        <dbReference type="ChEBI" id="CHEBI:29105"/>
    </ligand>
</feature>
<organism>
    <name type="scientific">Serratia proteamaculans (strain 568)</name>
    <dbReference type="NCBI Taxonomy" id="399741"/>
    <lineage>
        <taxon>Bacteria</taxon>
        <taxon>Pseudomonadati</taxon>
        <taxon>Pseudomonadota</taxon>
        <taxon>Gammaproteobacteria</taxon>
        <taxon>Enterobacterales</taxon>
        <taxon>Yersiniaceae</taxon>
        <taxon>Serratia</taxon>
    </lineage>
</organism>
<dbReference type="EC" id="5.3.1.28" evidence="1"/>
<dbReference type="EMBL" id="CP000826">
    <property type="protein sequence ID" value="ABV40056.1"/>
    <property type="molecule type" value="Genomic_DNA"/>
</dbReference>
<dbReference type="SMR" id="A8GAB6"/>
<dbReference type="STRING" id="399741.Spro_0950"/>
<dbReference type="KEGG" id="spe:Spro_0950"/>
<dbReference type="eggNOG" id="COG0279">
    <property type="taxonomic scope" value="Bacteria"/>
</dbReference>
<dbReference type="HOGENOM" id="CLU_080999_4_0_6"/>
<dbReference type="OrthoDB" id="9810929at2"/>
<dbReference type="UniPathway" id="UPA00041">
    <property type="reaction ID" value="UER00436"/>
</dbReference>
<dbReference type="GO" id="GO:0005737">
    <property type="term" value="C:cytoplasm"/>
    <property type="evidence" value="ECO:0007669"/>
    <property type="project" value="UniProtKB-SubCell"/>
</dbReference>
<dbReference type="GO" id="GO:0097367">
    <property type="term" value="F:carbohydrate derivative binding"/>
    <property type="evidence" value="ECO:0007669"/>
    <property type="project" value="InterPro"/>
</dbReference>
<dbReference type="GO" id="GO:0008968">
    <property type="term" value="F:D-sedoheptulose 7-phosphate isomerase activity"/>
    <property type="evidence" value="ECO:0007669"/>
    <property type="project" value="UniProtKB-UniRule"/>
</dbReference>
<dbReference type="GO" id="GO:0008270">
    <property type="term" value="F:zinc ion binding"/>
    <property type="evidence" value="ECO:0007669"/>
    <property type="project" value="UniProtKB-UniRule"/>
</dbReference>
<dbReference type="GO" id="GO:0005975">
    <property type="term" value="P:carbohydrate metabolic process"/>
    <property type="evidence" value="ECO:0007669"/>
    <property type="project" value="UniProtKB-UniRule"/>
</dbReference>
<dbReference type="GO" id="GO:2001061">
    <property type="term" value="P:D-glycero-D-manno-heptose 7-phosphate biosynthetic process"/>
    <property type="evidence" value="ECO:0007669"/>
    <property type="project" value="UniProtKB-UniPathway"/>
</dbReference>
<dbReference type="CDD" id="cd05006">
    <property type="entry name" value="SIS_GmhA"/>
    <property type="match status" value="1"/>
</dbReference>
<dbReference type="FunFam" id="3.40.50.10490:FF:000013">
    <property type="entry name" value="Phosphoheptose isomerase"/>
    <property type="match status" value="1"/>
</dbReference>
<dbReference type="Gene3D" id="3.40.50.10490">
    <property type="entry name" value="Glucose-6-phosphate isomerase like protein, domain 1"/>
    <property type="match status" value="1"/>
</dbReference>
<dbReference type="HAMAP" id="MF_00067">
    <property type="entry name" value="GmhA"/>
    <property type="match status" value="1"/>
</dbReference>
<dbReference type="InterPro" id="IPR035461">
    <property type="entry name" value="GmhA/DiaA"/>
</dbReference>
<dbReference type="InterPro" id="IPR004515">
    <property type="entry name" value="Phosphoheptose_Isoase"/>
</dbReference>
<dbReference type="InterPro" id="IPR001347">
    <property type="entry name" value="SIS_dom"/>
</dbReference>
<dbReference type="InterPro" id="IPR046348">
    <property type="entry name" value="SIS_dom_sf"/>
</dbReference>
<dbReference type="InterPro" id="IPR050099">
    <property type="entry name" value="SIS_GmhA/DiaA_subfam"/>
</dbReference>
<dbReference type="NCBIfam" id="TIGR00441">
    <property type="entry name" value="gmhA"/>
    <property type="match status" value="1"/>
</dbReference>
<dbReference type="NCBIfam" id="NF001628">
    <property type="entry name" value="PRK00414.1"/>
    <property type="match status" value="1"/>
</dbReference>
<dbReference type="PANTHER" id="PTHR30390:SF7">
    <property type="entry name" value="PHOSPHOHEPTOSE ISOMERASE"/>
    <property type="match status" value="1"/>
</dbReference>
<dbReference type="PANTHER" id="PTHR30390">
    <property type="entry name" value="SEDOHEPTULOSE 7-PHOSPHATE ISOMERASE / DNAA INITIATOR-ASSOCIATING FACTOR FOR REPLICATION INITIATION"/>
    <property type="match status" value="1"/>
</dbReference>
<dbReference type="Pfam" id="PF13580">
    <property type="entry name" value="SIS_2"/>
    <property type="match status" value="1"/>
</dbReference>
<dbReference type="SUPFAM" id="SSF53697">
    <property type="entry name" value="SIS domain"/>
    <property type="match status" value="1"/>
</dbReference>
<dbReference type="PROSITE" id="PS51464">
    <property type="entry name" value="SIS"/>
    <property type="match status" value="1"/>
</dbReference>